<evidence type="ECO:0000255" key="1">
    <source>
        <dbReference type="HAMAP-Rule" id="MF_00070"/>
    </source>
</evidence>
<accession>B7UNN0</accession>
<proteinExistence type="inferred from homology"/>
<name>KDGT_ECO27</name>
<reference key="1">
    <citation type="journal article" date="2009" name="J. Bacteriol.">
        <title>Complete genome sequence and comparative genome analysis of enteropathogenic Escherichia coli O127:H6 strain E2348/69.</title>
        <authorList>
            <person name="Iguchi A."/>
            <person name="Thomson N.R."/>
            <person name="Ogura Y."/>
            <person name="Saunders D."/>
            <person name="Ooka T."/>
            <person name="Henderson I.R."/>
            <person name="Harris D."/>
            <person name="Asadulghani M."/>
            <person name="Kurokawa K."/>
            <person name="Dean P."/>
            <person name="Kenny B."/>
            <person name="Quail M.A."/>
            <person name="Thurston S."/>
            <person name="Dougan G."/>
            <person name="Hayashi T."/>
            <person name="Parkhill J."/>
            <person name="Frankel G."/>
        </authorList>
    </citation>
    <scope>NUCLEOTIDE SEQUENCE [LARGE SCALE GENOMIC DNA]</scope>
    <source>
        <strain>E2348/69 / EPEC</strain>
    </source>
</reference>
<feature type="chain" id="PRO_1000118027" description="2-keto-3-deoxygluconate permease">
    <location>
        <begin position="1"/>
        <end position="327"/>
    </location>
</feature>
<feature type="transmembrane region" description="Helical" evidence="1">
    <location>
        <begin position="10"/>
        <end position="30"/>
    </location>
</feature>
<feature type="transmembrane region" description="Helical" evidence="1">
    <location>
        <begin position="42"/>
        <end position="62"/>
    </location>
</feature>
<feature type="transmembrane region" description="Helical" evidence="1">
    <location>
        <begin position="73"/>
        <end position="93"/>
    </location>
</feature>
<feature type="transmembrane region" description="Helical" evidence="1">
    <location>
        <begin position="95"/>
        <end position="115"/>
    </location>
</feature>
<feature type="transmembrane region" description="Helical" evidence="1">
    <location>
        <begin position="139"/>
        <end position="159"/>
    </location>
</feature>
<feature type="transmembrane region" description="Helical" evidence="1">
    <location>
        <begin position="163"/>
        <end position="183"/>
    </location>
</feature>
<feature type="transmembrane region" description="Helical" evidence="1">
    <location>
        <begin position="199"/>
        <end position="219"/>
    </location>
</feature>
<feature type="transmembrane region" description="Helical" evidence="1">
    <location>
        <begin position="224"/>
        <end position="244"/>
    </location>
</feature>
<feature type="transmembrane region" description="Helical" evidence="1">
    <location>
        <begin position="254"/>
        <end position="274"/>
    </location>
</feature>
<feature type="transmembrane region" description="Helical" evidence="1">
    <location>
        <begin position="289"/>
        <end position="309"/>
    </location>
</feature>
<comment type="function">
    <text evidence="1">Catalyzes the proton-dependent uptake of 2-keto-3-deoxygluconate (KDG) into the cell.</text>
</comment>
<comment type="catalytic activity">
    <reaction evidence="1">
        <text>2-dehydro-3-deoxy-D-gluconate(in) + H(+)(in) = 2-dehydro-3-deoxy-D-gluconate(out) + H(+)(out)</text>
        <dbReference type="Rhea" id="RHEA:29943"/>
        <dbReference type="ChEBI" id="CHEBI:15378"/>
        <dbReference type="ChEBI" id="CHEBI:57990"/>
    </reaction>
    <physiologicalReaction direction="right-to-left" evidence="1">
        <dbReference type="Rhea" id="RHEA:29945"/>
    </physiologicalReaction>
</comment>
<comment type="subcellular location">
    <subcellularLocation>
        <location evidence="1">Cell inner membrane</location>
        <topology evidence="1">Multi-pass membrane protein</topology>
    </subcellularLocation>
</comment>
<comment type="similarity">
    <text evidence="1">Belongs to the KdgT transporter family.</text>
</comment>
<organism>
    <name type="scientific">Escherichia coli O127:H6 (strain E2348/69 / EPEC)</name>
    <dbReference type="NCBI Taxonomy" id="574521"/>
    <lineage>
        <taxon>Bacteria</taxon>
        <taxon>Pseudomonadati</taxon>
        <taxon>Pseudomonadota</taxon>
        <taxon>Gammaproteobacteria</taxon>
        <taxon>Enterobacterales</taxon>
        <taxon>Enterobacteriaceae</taxon>
        <taxon>Escherichia</taxon>
    </lineage>
</organism>
<gene>
    <name evidence="1" type="primary">kdgT</name>
    <name type="ordered locus">E2348C_4214</name>
</gene>
<dbReference type="EMBL" id="FM180568">
    <property type="protein sequence ID" value="CAS11762.1"/>
    <property type="molecule type" value="Genomic_DNA"/>
</dbReference>
<dbReference type="RefSeq" id="WP_001166063.1">
    <property type="nucleotide sequence ID" value="NC_011601.1"/>
</dbReference>
<dbReference type="GeneID" id="75204583"/>
<dbReference type="KEGG" id="ecg:E2348C_4214"/>
<dbReference type="HOGENOM" id="CLU_057476_0_1_6"/>
<dbReference type="Proteomes" id="UP000008205">
    <property type="component" value="Chromosome"/>
</dbReference>
<dbReference type="GO" id="GO:0005886">
    <property type="term" value="C:plasma membrane"/>
    <property type="evidence" value="ECO:0007669"/>
    <property type="project" value="UniProtKB-SubCell"/>
</dbReference>
<dbReference type="GO" id="GO:0015649">
    <property type="term" value="F:2-keto-3-deoxygluconate:proton symporter activity"/>
    <property type="evidence" value="ECO:0007669"/>
    <property type="project" value="UniProtKB-UniRule"/>
</dbReference>
<dbReference type="HAMAP" id="MF_00070">
    <property type="entry name" value="KdgT"/>
    <property type="match status" value="1"/>
</dbReference>
<dbReference type="InterPro" id="IPR004684">
    <property type="entry name" value="2keto-3dGluconate_permease"/>
</dbReference>
<dbReference type="InterPro" id="IPR018395">
    <property type="entry name" value="2keto-3dGluconate_permease_sub"/>
</dbReference>
<dbReference type="NCBIfam" id="TIGR00793">
    <property type="entry name" value="kdgT"/>
    <property type="match status" value="1"/>
</dbReference>
<dbReference type="Pfam" id="PF03812">
    <property type="entry name" value="KdgT"/>
    <property type="match status" value="1"/>
</dbReference>
<protein>
    <recommendedName>
        <fullName evidence="1">2-keto-3-deoxygluconate permease</fullName>
        <shortName evidence="1">KDG permease</shortName>
    </recommendedName>
</protein>
<keyword id="KW-0997">Cell inner membrane</keyword>
<keyword id="KW-1003">Cell membrane</keyword>
<keyword id="KW-0472">Membrane</keyword>
<keyword id="KW-1185">Reference proteome</keyword>
<keyword id="KW-0762">Sugar transport</keyword>
<keyword id="KW-0769">Symport</keyword>
<keyword id="KW-0812">Transmembrane</keyword>
<keyword id="KW-1133">Transmembrane helix</keyword>
<keyword id="KW-0813">Transport</keyword>
<sequence>MQIKRSIEKIPGGMMLVPLFLGALCHTFSPGAGKYFGSFTNGMITGTVPILAVWFFCMGASIKLSATGTVLRKSGTLVVTKIAVAWVVAAIASRIIPEHGVEVGFFAGLSTLALVAAMDMTNGGLYASIMQQYGTKEEAGAFVLMSLESGPLMTMIILGTAGIASFEPHVFVGAVLPFLVGFALGNLDPELREFFSKAVQTLIPFFAFALGNTIDLTVIAQTGLLGILLGVAVIIVTGIPLIIADKLIGGGDGTAGIAASSSAGAAVATPVLIAEMVPAFKPMAPAATSLVATAVIVTSILVPILTSIWSRKVKARAAKIEILGTVK</sequence>